<organism>
    <name type="scientific">Corynebacterium diphtheriae (strain ATCC 700971 / NCTC 13129 / Biotype gravis)</name>
    <dbReference type="NCBI Taxonomy" id="257309"/>
    <lineage>
        <taxon>Bacteria</taxon>
        <taxon>Bacillati</taxon>
        <taxon>Actinomycetota</taxon>
        <taxon>Actinomycetes</taxon>
        <taxon>Mycobacteriales</taxon>
        <taxon>Corynebacteriaceae</taxon>
        <taxon>Corynebacterium</taxon>
    </lineage>
</organism>
<evidence type="ECO:0000255" key="1">
    <source>
        <dbReference type="HAMAP-Rule" id="MF_00402"/>
    </source>
</evidence>
<evidence type="ECO:0000305" key="2"/>
<proteinExistence type="inferred from homology"/>
<dbReference type="EMBL" id="BX248358">
    <property type="protein sequence ID" value="CAE50053.1"/>
    <property type="molecule type" value="Genomic_DNA"/>
</dbReference>
<dbReference type="RefSeq" id="WP_003852008.1">
    <property type="nucleotide sequence ID" value="NC_002935.2"/>
</dbReference>
<dbReference type="SMR" id="Q6NGI8"/>
<dbReference type="STRING" id="257309.DIP1527"/>
<dbReference type="GeneID" id="97332334"/>
<dbReference type="KEGG" id="cdi:DIP1527"/>
<dbReference type="HOGENOM" id="CLU_103507_2_1_11"/>
<dbReference type="Proteomes" id="UP000002198">
    <property type="component" value="Chromosome"/>
</dbReference>
<dbReference type="GO" id="GO:0022625">
    <property type="term" value="C:cytosolic large ribosomal subunit"/>
    <property type="evidence" value="ECO:0007669"/>
    <property type="project" value="TreeGrafter"/>
</dbReference>
<dbReference type="GO" id="GO:0003735">
    <property type="term" value="F:structural constituent of ribosome"/>
    <property type="evidence" value="ECO:0007669"/>
    <property type="project" value="InterPro"/>
</dbReference>
<dbReference type="GO" id="GO:0006412">
    <property type="term" value="P:translation"/>
    <property type="evidence" value="ECO:0007669"/>
    <property type="project" value="UniProtKB-UniRule"/>
</dbReference>
<dbReference type="FunFam" id="2.30.30.790:FF:000001">
    <property type="entry name" value="50S ribosomal protein L19"/>
    <property type="match status" value="1"/>
</dbReference>
<dbReference type="Gene3D" id="2.30.30.790">
    <property type="match status" value="1"/>
</dbReference>
<dbReference type="HAMAP" id="MF_00402">
    <property type="entry name" value="Ribosomal_bL19"/>
    <property type="match status" value="1"/>
</dbReference>
<dbReference type="InterPro" id="IPR001857">
    <property type="entry name" value="Ribosomal_bL19"/>
</dbReference>
<dbReference type="InterPro" id="IPR018257">
    <property type="entry name" value="Ribosomal_bL19_CS"/>
</dbReference>
<dbReference type="InterPro" id="IPR038657">
    <property type="entry name" value="Ribosomal_bL19_sf"/>
</dbReference>
<dbReference type="InterPro" id="IPR008991">
    <property type="entry name" value="Translation_prot_SH3-like_sf"/>
</dbReference>
<dbReference type="NCBIfam" id="TIGR01024">
    <property type="entry name" value="rplS_bact"/>
    <property type="match status" value="1"/>
</dbReference>
<dbReference type="PANTHER" id="PTHR15680:SF9">
    <property type="entry name" value="LARGE RIBOSOMAL SUBUNIT PROTEIN BL19M"/>
    <property type="match status" value="1"/>
</dbReference>
<dbReference type="PANTHER" id="PTHR15680">
    <property type="entry name" value="RIBOSOMAL PROTEIN L19"/>
    <property type="match status" value="1"/>
</dbReference>
<dbReference type="Pfam" id="PF01245">
    <property type="entry name" value="Ribosomal_L19"/>
    <property type="match status" value="1"/>
</dbReference>
<dbReference type="PIRSF" id="PIRSF002191">
    <property type="entry name" value="Ribosomal_L19"/>
    <property type="match status" value="1"/>
</dbReference>
<dbReference type="PRINTS" id="PR00061">
    <property type="entry name" value="RIBOSOMALL19"/>
</dbReference>
<dbReference type="SUPFAM" id="SSF50104">
    <property type="entry name" value="Translation proteins SH3-like domain"/>
    <property type="match status" value="1"/>
</dbReference>
<dbReference type="PROSITE" id="PS01015">
    <property type="entry name" value="RIBOSOMAL_L19"/>
    <property type="match status" value="1"/>
</dbReference>
<gene>
    <name evidence="1" type="primary">rplS</name>
    <name type="ordered locus">DIP1527</name>
</gene>
<keyword id="KW-1185">Reference proteome</keyword>
<keyword id="KW-0687">Ribonucleoprotein</keyword>
<keyword id="KW-0689">Ribosomal protein</keyword>
<accession>Q6NGI8</accession>
<feature type="chain" id="PRO_0000163444" description="Large ribosomal subunit protein bL19">
    <location>
        <begin position="1"/>
        <end position="113"/>
    </location>
</feature>
<name>RL19_CORDI</name>
<comment type="function">
    <text evidence="1">This protein is located at the 30S-50S ribosomal subunit interface and may play a role in the structure and function of the aminoacyl-tRNA binding site.</text>
</comment>
<comment type="similarity">
    <text evidence="1">Belongs to the bacterial ribosomal protein bL19 family.</text>
</comment>
<protein>
    <recommendedName>
        <fullName evidence="1">Large ribosomal subunit protein bL19</fullName>
    </recommendedName>
    <alternativeName>
        <fullName evidence="2">50S ribosomal protein L19</fullName>
    </alternativeName>
</protein>
<reference key="1">
    <citation type="journal article" date="2003" name="Nucleic Acids Res.">
        <title>The complete genome sequence and analysis of Corynebacterium diphtheriae NCTC13129.</title>
        <authorList>
            <person name="Cerdeno-Tarraga A.-M."/>
            <person name="Efstratiou A."/>
            <person name="Dover L.G."/>
            <person name="Holden M.T.G."/>
            <person name="Pallen M.J."/>
            <person name="Bentley S.D."/>
            <person name="Besra G.S."/>
            <person name="Churcher C.M."/>
            <person name="James K.D."/>
            <person name="De Zoysa A."/>
            <person name="Chillingworth T."/>
            <person name="Cronin A."/>
            <person name="Dowd L."/>
            <person name="Feltwell T."/>
            <person name="Hamlin N."/>
            <person name="Holroyd S."/>
            <person name="Jagels K."/>
            <person name="Moule S."/>
            <person name="Quail M.A."/>
            <person name="Rabbinowitsch E."/>
            <person name="Rutherford K.M."/>
            <person name="Thomson N.R."/>
            <person name="Unwin L."/>
            <person name="Whitehead S."/>
            <person name="Barrell B.G."/>
            <person name="Parkhill J."/>
        </authorList>
    </citation>
    <scope>NUCLEOTIDE SEQUENCE [LARGE SCALE GENOMIC DNA]</scope>
    <source>
        <strain>ATCC 700971 / NCTC 13129 / Biotype gravis</strain>
    </source>
</reference>
<sequence length="113" mass="12800">MNLLDKVDAASLRDDIPAFRPGDTLNVHVKVIEGSKSRIQVFKGVVIRRQGAGVRETFTIRKVSFGIGVERTFPVHTPNIDKIEVVTRGDVRRAKLYYLRDLRGKAAKIKEKR</sequence>